<accession>C6D8Z6</accession>
<organism>
    <name type="scientific">Pectobacterium carotovorum subsp. carotovorum (strain PC1)</name>
    <dbReference type="NCBI Taxonomy" id="561230"/>
    <lineage>
        <taxon>Bacteria</taxon>
        <taxon>Pseudomonadati</taxon>
        <taxon>Pseudomonadota</taxon>
        <taxon>Gammaproteobacteria</taxon>
        <taxon>Enterobacterales</taxon>
        <taxon>Pectobacteriaceae</taxon>
        <taxon>Pectobacterium</taxon>
    </lineage>
</organism>
<dbReference type="EC" id="6.1.1.6" evidence="1"/>
<dbReference type="EMBL" id="CP001657">
    <property type="protein sequence ID" value="ACT11704.1"/>
    <property type="molecule type" value="Genomic_DNA"/>
</dbReference>
<dbReference type="RefSeq" id="WP_012773351.1">
    <property type="nucleotide sequence ID" value="NC_012917.1"/>
</dbReference>
<dbReference type="SMR" id="C6D8Z6"/>
<dbReference type="STRING" id="561230.PC1_0649"/>
<dbReference type="KEGG" id="pct:PC1_0649"/>
<dbReference type="eggNOG" id="COG1190">
    <property type="taxonomic scope" value="Bacteria"/>
</dbReference>
<dbReference type="HOGENOM" id="CLU_008255_6_0_6"/>
<dbReference type="OrthoDB" id="9801152at2"/>
<dbReference type="Proteomes" id="UP000002736">
    <property type="component" value="Chromosome"/>
</dbReference>
<dbReference type="GO" id="GO:0005829">
    <property type="term" value="C:cytosol"/>
    <property type="evidence" value="ECO:0007669"/>
    <property type="project" value="TreeGrafter"/>
</dbReference>
<dbReference type="GO" id="GO:0005524">
    <property type="term" value="F:ATP binding"/>
    <property type="evidence" value="ECO:0007669"/>
    <property type="project" value="UniProtKB-UniRule"/>
</dbReference>
<dbReference type="GO" id="GO:0004824">
    <property type="term" value="F:lysine-tRNA ligase activity"/>
    <property type="evidence" value="ECO:0007669"/>
    <property type="project" value="UniProtKB-UniRule"/>
</dbReference>
<dbReference type="GO" id="GO:0000287">
    <property type="term" value="F:magnesium ion binding"/>
    <property type="evidence" value="ECO:0007669"/>
    <property type="project" value="UniProtKB-UniRule"/>
</dbReference>
<dbReference type="GO" id="GO:0000049">
    <property type="term" value="F:tRNA binding"/>
    <property type="evidence" value="ECO:0007669"/>
    <property type="project" value="TreeGrafter"/>
</dbReference>
<dbReference type="GO" id="GO:0006430">
    <property type="term" value="P:lysyl-tRNA aminoacylation"/>
    <property type="evidence" value="ECO:0007669"/>
    <property type="project" value="UniProtKB-UniRule"/>
</dbReference>
<dbReference type="CDD" id="cd00775">
    <property type="entry name" value="LysRS_core"/>
    <property type="match status" value="1"/>
</dbReference>
<dbReference type="CDD" id="cd04322">
    <property type="entry name" value="LysRS_N"/>
    <property type="match status" value="1"/>
</dbReference>
<dbReference type="FunFam" id="2.40.50.140:FF:000024">
    <property type="entry name" value="Lysine--tRNA ligase"/>
    <property type="match status" value="1"/>
</dbReference>
<dbReference type="FunFam" id="3.30.930.10:FF:000001">
    <property type="entry name" value="Lysine--tRNA ligase"/>
    <property type="match status" value="1"/>
</dbReference>
<dbReference type="Gene3D" id="3.30.930.10">
    <property type="entry name" value="Bira Bifunctional Protein, Domain 2"/>
    <property type="match status" value="1"/>
</dbReference>
<dbReference type="Gene3D" id="2.40.50.140">
    <property type="entry name" value="Nucleic acid-binding proteins"/>
    <property type="match status" value="1"/>
</dbReference>
<dbReference type="HAMAP" id="MF_00252">
    <property type="entry name" value="Lys_tRNA_synth_class2"/>
    <property type="match status" value="1"/>
</dbReference>
<dbReference type="InterPro" id="IPR004364">
    <property type="entry name" value="Aa-tRNA-synt_II"/>
</dbReference>
<dbReference type="InterPro" id="IPR006195">
    <property type="entry name" value="aa-tRNA-synth_II"/>
</dbReference>
<dbReference type="InterPro" id="IPR045864">
    <property type="entry name" value="aa-tRNA-synth_II/BPL/LPL"/>
</dbReference>
<dbReference type="InterPro" id="IPR002313">
    <property type="entry name" value="Lys-tRNA-ligase_II"/>
</dbReference>
<dbReference type="InterPro" id="IPR034762">
    <property type="entry name" value="Lys-tRNA-ligase_II_bac/euk"/>
</dbReference>
<dbReference type="InterPro" id="IPR044136">
    <property type="entry name" value="Lys-tRNA-ligase_II_N"/>
</dbReference>
<dbReference type="InterPro" id="IPR018149">
    <property type="entry name" value="Lys-tRNA-synth_II_C"/>
</dbReference>
<dbReference type="InterPro" id="IPR012340">
    <property type="entry name" value="NA-bd_OB-fold"/>
</dbReference>
<dbReference type="InterPro" id="IPR004365">
    <property type="entry name" value="NA-bd_OB_tRNA"/>
</dbReference>
<dbReference type="NCBIfam" id="TIGR00499">
    <property type="entry name" value="lysS_bact"/>
    <property type="match status" value="1"/>
</dbReference>
<dbReference type="NCBIfam" id="NF001756">
    <property type="entry name" value="PRK00484.1"/>
    <property type="match status" value="1"/>
</dbReference>
<dbReference type="NCBIfam" id="NF009101">
    <property type="entry name" value="PRK12445.1"/>
    <property type="match status" value="1"/>
</dbReference>
<dbReference type="PANTHER" id="PTHR42918:SF15">
    <property type="entry name" value="LYSINE--TRNA LIGASE, CHLOROPLASTIC_MITOCHONDRIAL"/>
    <property type="match status" value="1"/>
</dbReference>
<dbReference type="PANTHER" id="PTHR42918">
    <property type="entry name" value="LYSYL-TRNA SYNTHETASE"/>
    <property type="match status" value="1"/>
</dbReference>
<dbReference type="Pfam" id="PF00152">
    <property type="entry name" value="tRNA-synt_2"/>
    <property type="match status" value="1"/>
</dbReference>
<dbReference type="Pfam" id="PF01336">
    <property type="entry name" value="tRNA_anti-codon"/>
    <property type="match status" value="1"/>
</dbReference>
<dbReference type="PIRSF" id="PIRSF039101">
    <property type="entry name" value="LysRS2"/>
    <property type="match status" value="1"/>
</dbReference>
<dbReference type="PRINTS" id="PR00982">
    <property type="entry name" value="TRNASYNTHLYS"/>
</dbReference>
<dbReference type="SUPFAM" id="SSF55681">
    <property type="entry name" value="Class II aaRS and biotin synthetases"/>
    <property type="match status" value="1"/>
</dbReference>
<dbReference type="SUPFAM" id="SSF50249">
    <property type="entry name" value="Nucleic acid-binding proteins"/>
    <property type="match status" value="1"/>
</dbReference>
<dbReference type="PROSITE" id="PS50862">
    <property type="entry name" value="AA_TRNA_LIGASE_II"/>
    <property type="match status" value="1"/>
</dbReference>
<proteinExistence type="inferred from homology"/>
<sequence>MAESQSQGADQAQDLNNELKTRREKLVALRETGIAFPNDFRRDSTSDRLHAEFDGKENEELEELGVEVTVAGRMMTRRIMGKASFVTLQDVGGRIQLYVSRDDLAEGIYNEQFKKWDLGDILGARGKLFKTKTGELSIHCTELRLLTKALRPLPDKFHGLADQETRYRQRYLDLIANDESRNTFRIRSKVMAAIRSFMVDHGFMEVETPMMQVIPGGASARPFITHHNALDIDMYLRIAPELYLKRLVVGGFERVFEINRNFRNEGVSPRHNPEFTMMELYMAYADYKDLIVLTENLFRTLTQDVLGSTTVEYGDQTFDFGKPFEKLTMREAICKYRPETNVADLDDLEKATAIAQSLGIKIEKSWGLGRIVTEIFEETAESSLIQPTFITEYPAEVSPLARRNDQNPEITDRFEFFIGGREIGNGFSELNDAEDQAERFAQQVNAKDAGDDEAMFYDEDYVTALEHGLPPTAGLGIGIDRMVMLFTNSHTIRDVILFPAMRPQK</sequence>
<keyword id="KW-0030">Aminoacyl-tRNA synthetase</keyword>
<keyword id="KW-0067">ATP-binding</keyword>
<keyword id="KW-0963">Cytoplasm</keyword>
<keyword id="KW-0436">Ligase</keyword>
<keyword id="KW-0460">Magnesium</keyword>
<keyword id="KW-0479">Metal-binding</keyword>
<keyword id="KW-0547">Nucleotide-binding</keyword>
<keyword id="KW-0648">Protein biosynthesis</keyword>
<evidence type="ECO:0000255" key="1">
    <source>
        <dbReference type="HAMAP-Rule" id="MF_00252"/>
    </source>
</evidence>
<comment type="catalytic activity">
    <reaction evidence="1">
        <text>tRNA(Lys) + L-lysine + ATP = L-lysyl-tRNA(Lys) + AMP + diphosphate</text>
        <dbReference type="Rhea" id="RHEA:20792"/>
        <dbReference type="Rhea" id="RHEA-COMP:9696"/>
        <dbReference type="Rhea" id="RHEA-COMP:9697"/>
        <dbReference type="ChEBI" id="CHEBI:30616"/>
        <dbReference type="ChEBI" id="CHEBI:32551"/>
        <dbReference type="ChEBI" id="CHEBI:33019"/>
        <dbReference type="ChEBI" id="CHEBI:78442"/>
        <dbReference type="ChEBI" id="CHEBI:78529"/>
        <dbReference type="ChEBI" id="CHEBI:456215"/>
        <dbReference type="EC" id="6.1.1.6"/>
    </reaction>
</comment>
<comment type="cofactor">
    <cofactor evidence="1">
        <name>Mg(2+)</name>
        <dbReference type="ChEBI" id="CHEBI:18420"/>
    </cofactor>
    <text evidence="1">Binds 3 Mg(2+) ions per subunit.</text>
</comment>
<comment type="subunit">
    <text evidence="1">Homodimer.</text>
</comment>
<comment type="subcellular location">
    <subcellularLocation>
        <location evidence="1">Cytoplasm</location>
    </subcellularLocation>
</comment>
<comment type="similarity">
    <text evidence="1">Belongs to the class-II aminoacyl-tRNA synthetase family.</text>
</comment>
<gene>
    <name evidence="1" type="primary">lysS</name>
    <name type="ordered locus">PC1_0649</name>
</gene>
<protein>
    <recommendedName>
        <fullName evidence="1">Lysine--tRNA ligase</fullName>
        <ecNumber evidence="1">6.1.1.6</ecNumber>
    </recommendedName>
    <alternativeName>
        <fullName evidence="1">Lysyl-tRNA synthetase</fullName>
        <shortName evidence="1">LysRS</shortName>
    </alternativeName>
</protein>
<reference key="1">
    <citation type="submission" date="2009-07" db="EMBL/GenBank/DDBJ databases">
        <title>Complete sequence of Pectobacterium carotovorum subsp. carotovorum PC1.</title>
        <authorList>
            <consortium name="US DOE Joint Genome Institute"/>
            <person name="Lucas S."/>
            <person name="Copeland A."/>
            <person name="Lapidus A."/>
            <person name="Glavina del Rio T."/>
            <person name="Tice H."/>
            <person name="Bruce D."/>
            <person name="Goodwin L."/>
            <person name="Pitluck S."/>
            <person name="Munk A.C."/>
            <person name="Brettin T."/>
            <person name="Detter J.C."/>
            <person name="Han C."/>
            <person name="Tapia R."/>
            <person name="Larimer F."/>
            <person name="Land M."/>
            <person name="Hauser L."/>
            <person name="Kyrpides N."/>
            <person name="Mikhailova N."/>
            <person name="Balakrishnan V."/>
            <person name="Glasner J."/>
            <person name="Perna N.T."/>
        </authorList>
    </citation>
    <scope>NUCLEOTIDE SEQUENCE [LARGE SCALE GENOMIC DNA]</scope>
    <source>
        <strain>PC1</strain>
    </source>
</reference>
<feature type="chain" id="PRO_1000204569" description="Lysine--tRNA ligase">
    <location>
        <begin position="1"/>
        <end position="505"/>
    </location>
</feature>
<feature type="binding site" evidence="1">
    <location>
        <position position="415"/>
    </location>
    <ligand>
        <name>Mg(2+)</name>
        <dbReference type="ChEBI" id="CHEBI:18420"/>
        <label>1</label>
    </ligand>
</feature>
<feature type="binding site" evidence="1">
    <location>
        <position position="422"/>
    </location>
    <ligand>
        <name>Mg(2+)</name>
        <dbReference type="ChEBI" id="CHEBI:18420"/>
        <label>1</label>
    </ligand>
</feature>
<feature type="binding site" evidence="1">
    <location>
        <position position="422"/>
    </location>
    <ligand>
        <name>Mg(2+)</name>
        <dbReference type="ChEBI" id="CHEBI:18420"/>
        <label>2</label>
    </ligand>
</feature>
<name>SYK_PECCP</name>